<evidence type="ECO:0000255" key="1">
    <source>
        <dbReference type="HAMAP-Rule" id="MF_01539"/>
    </source>
</evidence>
<reference key="1">
    <citation type="journal article" date="2007" name="BMC Microbiol.">
        <title>Subtle genetic changes enhance virulence of methicillin resistant and sensitive Staphylococcus aureus.</title>
        <authorList>
            <person name="Highlander S.K."/>
            <person name="Hulten K.G."/>
            <person name="Qin X."/>
            <person name="Jiang H."/>
            <person name="Yerrapragada S."/>
            <person name="Mason E.O. Jr."/>
            <person name="Shang Y."/>
            <person name="Williams T.M."/>
            <person name="Fortunov R.M."/>
            <person name="Liu Y."/>
            <person name="Igboeli O."/>
            <person name="Petrosino J."/>
            <person name="Tirumalai M."/>
            <person name="Uzman A."/>
            <person name="Fox G.E."/>
            <person name="Cardenas A.M."/>
            <person name="Muzny D.M."/>
            <person name="Hemphill L."/>
            <person name="Ding Y."/>
            <person name="Dugan S."/>
            <person name="Blyth P.R."/>
            <person name="Buhay C.J."/>
            <person name="Dinh H.H."/>
            <person name="Hawes A.C."/>
            <person name="Holder M."/>
            <person name="Kovar C.L."/>
            <person name="Lee S.L."/>
            <person name="Liu W."/>
            <person name="Nazareth L.V."/>
            <person name="Wang Q."/>
            <person name="Zhou J."/>
            <person name="Kaplan S.L."/>
            <person name="Weinstock G.M."/>
        </authorList>
    </citation>
    <scope>NUCLEOTIDE SEQUENCE [LARGE SCALE GENOMIC DNA]</scope>
    <source>
        <strain>USA300 / TCH1516</strain>
    </source>
</reference>
<proteinExistence type="inferred from homology"/>
<name>TMCAL_STAAT</name>
<keyword id="KW-0067">ATP-binding</keyword>
<keyword id="KW-0963">Cytoplasm</keyword>
<keyword id="KW-0436">Ligase</keyword>
<keyword id="KW-0547">Nucleotide-binding</keyword>
<keyword id="KW-0694">RNA-binding</keyword>
<keyword id="KW-0819">tRNA processing</keyword>
<keyword id="KW-0820">tRNA-binding</keyword>
<comment type="function">
    <text evidence="1">Catalyzes the formation of N(4)-acetylcytidine (ac(4)C) at the wobble position of elongator tRNA(Met), using acetate and ATP as substrates. First activates an acetate ion to form acetyladenylate (Ac-AMP) and then transfers the acetyl group to tRNA to form ac(4)C34.</text>
</comment>
<comment type="catalytic activity">
    <reaction evidence="1">
        <text>cytidine(34) in elongator tRNA(Met) + acetate + ATP = N(4)-acetylcytidine(34) in elongator tRNA(Met) + AMP + diphosphate</text>
        <dbReference type="Rhea" id="RHEA:58144"/>
        <dbReference type="Rhea" id="RHEA-COMP:10693"/>
        <dbReference type="Rhea" id="RHEA-COMP:10694"/>
        <dbReference type="ChEBI" id="CHEBI:30089"/>
        <dbReference type="ChEBI" id="CHEBI:30616"/>
        <dbReference type="ChEBI" id="CHEBI:33019"/>
        <dbReference type="ChEBI" id="CHEBI:74900"/>
        <dbReference type="ChEBI" id="CHEBI:82748"/>
        <dbReference type="ChEBI" id="CHEBI:456215"/>
    </reaction>
</comment>
<comment type="subcellular location">
    <subcellularLocation>
        <location evidence="1">Cytoplasm</location>
    </subcellularLocation>
</comment>
<comment type="similarity">
    <text evidence="1">Belongs to the TmcAL family.</text>
</comment>
<protein>
    <recommendedName>
        <fullName evidence="1">tRNA(Met) cytidine acetate ligase</fullName>
        <ecNumber evidence="1">6.3.4.-</ecNumber>
    </recommendedName>
</protein>
<sequence>MKSVGLITEYNPFHNGHQYHINQSKKLTNADVTIAIMSGNFVMRGEPAIYNKFTRAKMALSTADLVIELPATASLSSGDHFAELAVKVADYMSVDTIAFGSENNDIKTLKQLAHSINEIEQSESFSQKVKEGKSYPRIISELLEHHEALASPNNILGISYLKAIAKNAKNINAISIKRENAQHHDSLIQHHQFASGTSIRTSIISQDDHWHHVVPKDIQHLYVTPHITLNQIFPYLKYQIIAMTTDSLKNIYTVTEGFENRLKSNIYEATDFHHFVKLLKTKRYTYTHIQRLLMNVLLNIKPTDVTSNIHAVKVLAMNDRGRQYLKHLKTAFPERQYITNINKSNAHYFTNEIKATHIYNAISGQQQTDFNTPVIQQYR</sequence>
<accession>A8Z1Q9</accession>
<gene>
    <name evidence="1" type="primary">tmcAL</name>
    <name type="ordered locus">USA300HOU_1063</name>
</gene>
<organism>
    <name type="scientific">Staphylococcus aureus (strain USA300 / TCH1516)</name>
    <dbReference type="NCBI Taxonomy" id="451516"/>
    <lineage>
        <taxon>Bacteria</taxon>
        <taxon>Bacillati</taxon>
        <taxon>Bacillota</taxon>
        <taxon>Bacilli</taxon>
        <taxon>Bacillales</taxon>
        <taxon>Staphylococcaceae</taxon>
        <taxon>Staphylococcus</taxon>
    </lineage>
</organism>
<feature type="chain" id="PRO_1000087624" description="tRNA(Met) cytidine acetate ligase">
    <location>
        <begin position="1"/>
        <end position="379"/>
    </location>
</feature>
<feature type="binding site" evidence="1">
    <location>
        <begin position="7"/>
        <end position="20"/>
    </location>
    <ligand>
        <name>ATP</name>
        <dbReference type="ChEBI" id="CHEBI:30616"/>
    </ligand>
</feature>
<feature type="binding site" evidence="1">
    <location>
        <position position="100"/>
    </location>
    <ligand>
        <name>ATP</name>
        <dbReference type="ChEBI" id="CHEBI:30616"/>
    </ligand>
</feature>
<feature type="binding site" evidence="1">
    <location>
        <position position="153"/>
    </location>
    <ligand>
        <name>ATP</name>
        <dbReference type="ChEBI" id="CHEBI:30616"/>
    </ligand>
</feature>
<feature type="binding site" evidence="1">
    <location>
        <position position="178"/>
    </location>
    <ligand>
        <name>ATP</name>
        <dbReference type="ChEBI" id="CHEBI:30616"/>
    </ligand>
</feature>
<dbReference type="EC" id="6.3.4.-" evidence="1"/>
<dbReference type="EMBL" id="CP000730">
    <property type="protein sequence ID" value="ABX29082.1"/>
    <property type="molecule type" value="Genomic_DNA"/>
</dbReference>
<dbReference type="RefSeq" id="WP_000843611.1">
    <property type="nucleotide sequence ID" value="NC_010079.1"/>
</dbReference>
<dbReference type="SMR" id="A8Z1Q9"/>
<dbReference type="KEGG" id="sax:USA300HOU_1063"/>
<dbReference type="HOGENOM" id="CLU_038915_0_2_9"/>
<dbReference type="BioCyc" id="SAUR451516-HMP:GTV5-1082-MONOMER"/>
<dbReference type="GO" id="GO:0005737">
    <property type="term" value="C:cytoplasm"/>
    <property type="evidence" value="ECO:0007669"/>
    <property type="project" value="UniProtKB-SubCell"/>
</dbReference>
<dbReference type="GO" id="GO:0005524">
    <property type="term" value="F:ATP binding"/>
    <property type="evidence" value="ECO:0007669"/>
    <property type="project" value="UniProtKB-KW"/>
</dbReference>
<dbReference type="GO" id="GO:0016879">
    <property type="term" value="F:ligase activity, forming carbon-nitrogen bonds"/>
    <property type="evidence" value="ECO:0007669"/>
    <property type="project" value="UniProtKB-UniRule"/>
</dbReference>
<dbReference type="GO" id="GO:0000049">
    <property type="term" value="F:tRNA binding"/>
    <property type="evidence" value="ECO:0007669"/>
    <property type="project" value="UniProtKB-KW"/>
</dbReference>
<dbReference type="GO" id="GO:0006400">
    <property type="term" value="P:tRNA modification"/>
    <property type="evidence" value="ECO:0007669"/>
    <property type="project" value="UniProtKB-UniRule"/>
</dbReference>
<dbReference type="Gene3D" id="3.40.50.620">
    <property type="entry name" value="HUPs"/>
    <property type="match status" value="1"/>
</dbReference>
<dbReference type="HAMAP" id="MF_01539">
    <property type="entry name" value="TmcAL"/>
    <property type="match status" value="1"/>
</dbReference>
<dbReference type="InterPro" id="IPR014729">
    <property type="entry name" value="Rossmann-like_a/b/a_fold"/>
</dbReference>
<dbReference type="InterPro" id="IPR008513">
    <property type="entry name" value="tRNA(Met)_cyd_acetate_ligase"/>
</dbReference>
<dbReference type="NCBIfam" id="NF010191">
    <property type="entry name" value="PRK13670.1"/>
    <property type="match status" value="1"/>
</dbReference>
<dbReference type="PANTHER" id="PTHR37825">
    <property type="entry name" value="TRNA(MET) CYTIDINE ACETATE LIGASE"/>
    <property type="match status" value="1"/>
</dbReference>
<dbReference type="PANTHER" id="PTHR37825:SF1">
    <property type="entry name" value="TRNA(MET) CYTIDINE ACETATE LIGASE"/>
    <property type="match status" value="1"/>
</dbReference>
<dbReference type="Pfam" id="PF05636">
    <property type="entry name" value="HIGH_NTase1"/>
    <property type="match status" value="1"/>
</dbReference>
<dbReference type="SUPFAM" id="SSF52374">
    <property type="entry name" value="Nucleotidylyl transferase"/>
    <property type="match status" value="1"/>
</dbReference>